<protein>
    <recommendedName>
        <fullName evidence="1">Dihydroorotase</fullName>
        <shortName evidence="1">DHOase</shortName>
        <ecNumber evidence="1">3.5.2.3</ecNumber>
    </recommendedName>
</protein>
<evidence type="ECO:0000255" key="1">
    <source>
        <dbReference type="HAMAP-Rule" id="MF_00219"/>
    </source>
</evidence>
<name>PYRC_SHIFL</name>
<keyword id="KW-0378">Hydrolase</keyword>
<keyword id="KW-0479">Metal-binding</keyword>
<keyword id="KW-0665">Pyrimidine biosynthesis</keyword>
<keyword id="KW-1185">Reference proteome</keyword>
<keyword id="KW-0862">Zinc</keyword>
<feature type="chain" id="PRO_1000024062" description="Dihydroorotase">
    <location>
        <begin position="1"/>
        <end position="348"/>
    </location>
</feature>
<feature type="active site" evidence="1">
    <location>
        <position position="251"/>
    </location>
</feature>
<feature type="binding site" evidence="1">
    <location>
        <position position="17"/>
    </location>
    <ligand>
        <name>Zn(2+)</name>
        <dbReference type="ChEBI" id="CHEBI:29105"/>
        <label>1</label>
    </ligand>
</feature>
<feature type="binding site" evidence="1">
    <location>
        <begin position="19"/>
        <end position="21"/>
    </location>
    <ligand>
        <name>substrate</name>
    </ligand>
</feature>
<feature type="binding site" evidence="1">
    <location>
        <position position="19"/>
    </location>
    <ligand>
        <name>Zn(2+)</name>
        <dbReference type="ChEBI" id="CHEBI:29105"/>
        <label>1</label>
    </ligand>
</feature>
<feature type="binding site" evidence="1">
    <location>
        <position position="45"/>
    </location>
    <ligand>
        <name>substrate</name>
    </ligand>
</feature>
<feature type="binding site" description="via carbamate group" evidence="1">
    <location>
        <position position="103"/>
    </location>
    <ligand>
        <name>Zn(2+)</name>
        <dbReference type="ChEBI" id="CHEBI:29105"/>
        <label>1</label>
    </ligand>
</feature>
<feature type="binding site" description="via carbamate group" evidence="1">
    <location>
        <position position="103"/>
    </location>
    <ligand>
        <name>Zn(2+)</name>
        <dbReference type="ChEBI" id="CHEBI:29105"/>
        <label>2</label>
    </ligand>
</feature>
<feature type="binding site" evidence="1">
    <location>
        <position position="140"/>
    </location>
    <ligand>
        <name>substrate</name>
    </ligand>
</feature>
<feature type="binding site" evidence="1">
    <location>
        <position position="140"/>
    </location>
    <ligand>
        <name>Zn(2+)</name>
        <dbReference type="ChEBI" id="CHEBI:29105"/>
        <label>2</label>
    </ligand>
</feature>
<feature type="binding site" evidence="1">
    <location>
        <position position="178"/>
    </location>
    <ligand>
        <name>Zn(2+)</name>
        <dbReference type="ChEBI" id="CHEBI:29105"/>
        <label>2</label>
    </ligand>
</feature>
<feature type="binding site" evidence="1">
    <location>
        <position position="223"/>
    </location>
    <ligand>
        <name>substrate</name>
    </ligand>
</feature>
<feature type="binding site" evidence="1">
    <location>
        <position position="251"/>
    </location>
    <ligand>
        <name>Zn(2+)</name>
        <dbReference type="ChEBI" id="CHEBI:29105"/>
        <label>1</label>
    </ligand>
</feature>
<feature type="binding site" evidence="1">
    <location>
        <position position="255"/>
    </location>
    <ligand>
        <name>substrate</name>
    </ligand>
</feature>
<feature type="binding site" evidence="1">
    <location>
        <position position="267"/>
    </location>
    <ligand>
        <name>substrate</name>
    </ligand>
</feature>
<feature type="modified residue" description="N6-carboxylysine" evidence="1">
    <location>
        <position position="103"/>
    </location>
</feature>
<organism>
    <name type="scientific">Shigella flexneri</name>
    <dbReference type="NCBI Taxonomy" id="623"/>
    <lineage>
        <taxon>Bacteria</taxon>
        <taxon>Pseudomonadati</taxon>
        <taxon>Pseudomonadota</taxon>
        <taxon>Gammaproteobacteria</taxon>
        <taxon>Enterobacterales</taxon>
        <taxon>Enterobacteriaceae</taxon>
        <taxon>Shigella</taxon>
    </lineage>
</organism>
<sequence>MTAPSQVLKIRRPDDWHLHLRDGDMLKTVVPYTSEIYGRAIVMPNLAPPVTTVEAAVAYRQRILDAVPAGHDFTPLMTCYLTDSLDPNELERGFNEAVFTAAKLYPANATTNSSHGVTSIDAIMPVLERMEKIGMPLLVHGEVTHADIDIFDREARFIESVMEPLRQRLTALKVVFEHITTKDAADYVRDGNERLAATITPQHLMFNRNHMLVGGVRPHLYCLPILKRNIHQQALRELVASGFNRVFLGTDSAPHARHRKESSCGCAGCFNAPTALGSYATVFEEMNALQHFEAFCSVNGPQFYGLPVNDTFIELVREEQQVAESIALTDDTLVPFLAGETVRWSVKQ</sequence>
<proteinExistence type="inferred from homology"/>
<dbReference type="EC" id="3.5.2.3" evidence="1"/>
<dbReference type="EMBL" id="AE005674">
    <property type="protein sequence ID" value="AAN42690.1"/>
    <property type="molecule type" value="Genomic_DNA"/>
</dbReference>
<dbReference type="EMBL" id="AE014073">
    <property type="protein sequence ID" value="AAP16577.1"/>
    <property type="molecule type" value="Genomic_DNA"/>
</dbReference>
<dbReference type="RefSeq" id="NP_706983.1">
    <property type="nucleotide sequence ID" value="NC_004337.2"/>
</dbReference>
<dbReference type="RefSeq" id="WP_000126530.1">
    <property type="nucleotide sequence ID" value="NZ_WPGW01000001.1"/>
</dbReference>
<dbReference type="SMR" id="Q83RT8"/>
<dbReference type="STRING" id="198214.SF1068"/>
<dbReference type="PaxDb" id="198214-SF1068"/>
<dbReference type="GeneID" id="1024025"/>
<dbReference type="KEGG" id="sfl:SF1068"/>
<dbReference type="KEGG" id="sfx:S1146"/>
<dbReference type="PATRIC" id="fig|198214.7.peg.1251"/>
<dbReference type="HOGENOM" id="CLU_041558_1_0_6"/>
<dbReference type="UniPathway" id="UPA00070">
    <property type="reaction ID" value="UER00117"/>
</dbReference>
<dbReference type="Proteomes" id="UP000001006">
    <property type="component" value="Chromosome"/>
</dbReference>
<dbReference type="Proteomes" id="UP000002673">
    <property type="component" value="Chromosome"/>
</dbReference>
<dbReference type="GO" id="GO:0005829">
    <property type="term" value="C:cytosol"/>
    <property type="evidence" value="ECO:0007669"/>
    <property type="project" value="TreeGrafter"/>
</dbReference>
<dbReference type="GO" id="GO:0004151">
    <property type="term" value="F:dihydroorotase activity"/>
    <property type="evidence" value="ECO:0007669"/>
    <property type="project" value="UniProtKB-UniRule"/>
</dbReference>
<dbReference type="GO" id="GO:0008270">
    <property type="term" value="F:zinc ion binding"/>
    <property type="evidence" value="ECO:0007669"/>
    <property type="project" value="UniProtKB-UniRule"/>
</dbReference>
<dbReference type="GO" id="GO:0006207">
    <property type="term" value="P:'de novo' pyrimidine nucleobase biosynthetic process"/>
    <property type="evidence" value="ECO:0007669"/>
    <property type="project" value="TreeGrafter"/>
</dbReference>
<dbReference type="GO" id="GO:0044205">
    <property type="term" value="P:'de novo' UMP biosynthetic process"/>
    <property type="evidence" value="ECO:0007669"/>
    <property type="project" value="UniProtKB-UniRule"/>
</dbReference>
<dbReference type="CDD" id="cd01294">
    <property type="entry name" value="DHOase"/>
    <property type="match status" value="1"/>
</dbReference>
<dbReference type="FunFam" id="3.20.20.140:FF:000006">
    <property type="entry name" value="Dihydroorotase"/>
    <property type="match status" value="1"/>
</dbReference>
<dbReference type="Gene3D" id="3.20.20.140">
    <property type="entry name" value="Metal-dependent hydrolases"/>
    <property type="match status" value="1"/>
</dbReference>
<dbReference type="HAMAP" id="MF_00219">
    <property type="entry name" value="PyrC_classII"/>
    <property type="match status" value="1"/>
</dbReference>
<dbReference type="InterPro" id="IPR006680">
    <property type="entry name" value="Amidohydro-rel"/>
</dbReference>
<dbReference type="InterPro" id="IPR004721">
    <property type="entry name" value="DHOdimr"/>
</dbReference>
<dbReference type="InterPro" id="IPR002195">
    <property type="entry name" value="Dihydroorotase_CS"/>
</dbReference>
<dbReference type="InterPro" id="IPR032466">
    <property type="entry name" value="Metal_Hydrolase"/>
</dbReference>
<dbReference type="NCBIfam" id="TIGR00856">
    <property type="entry name" value="pyrC_dimer"/>
    <property type="match status" value="1"/>
</dbReference>
<dbReference type="PANTHER" id="PTHR43137">
    <property type="entry name" value="DIHYDROOROTASE"/>
    <property type="match status" value="1"/>
</dbReference>
<dbReference type="PANTHER" id="PTHR43137:SF1">
    <property type="entry name" value="DIHYDROOROTASE"/>
    <property type="match status" value="1"/>
</dbReference>
<dbReference type="Pfam" id="PF01979">
    <property type="entry name" value="Amidohydro_1"/>
    <property type="match status" value="1"/>
</dbReference>
<dbReference type="PIRSF" id="PIRSF001237">
    <property type="entry name" value="DHOdimr"/>
    <property type="match status" value="1"/>
</dbReference>
<dbReference type="SUPFAM" id="SSF51556">
    <property type="entry name" value="Metallo-dependent hydrolases"/>
    <property type="match status" value="1"/>
</dbReference>
<dbReference type="PROSITE" id="PS00482">
    <property type="entry name" value="DIHYDROOROTASE_1"/>
    <property type="match status" value="1"/>
</dbReference>
<dbReference type="PROSITE" id="PS00483">
    <property type="entry name" value="DIHYDROOROTASE_2"/>
    <property type="match status" value="1"/>
</dbReference>
<comment type="function">
    <text evidence="1">Catalyzes the reversible cyclization of carbamoyl aspartate to dihydroorotate.</text>
</comment>
<comment type="catalytic activity">
    <reaction evidence="1">
        <text>(S)-dihydroorotate + H2O = N-carbamoyl-L-aspartate + H(+)</text>
        <dbReference type="Rhea" id="RHEA:24296"/>
        <dbReference type="ChEBI" id="CHEBI:15377"/>
        <dbReference type="ChEBI" id="CHEBI:15378"/>
        <dbReference type="ChEBI" id="CHEBI:30864"/>
        <dbReference type="ChEBI" id="CHEBI:32814"/>
        <dbReference type="EC" id="3.5.2.3"/>
    </reaction>
</comment>
<comment type="cofactor">
    <cofactor evidence="1">
        <name>Zn(2+)</name>
        <dbReference type="ChEBI" id="CHEBI:29105"/>
    </cofactor>
    <text evidence="1">Binds 2 Zn(2+) ions per subunit.</text>
</comment>
<comment type="pathway">
    <text evidence="1">Pyrimidine metabolism; UMP biosynthesis via de novo pathway; (S)-dihydroorotate from bicarbonate: step 3/3.</text>
</comment>
<comment type="subunit">
    <text evidence="1">Homodimer.</text>
</comment>
<comment type="similarity">
    <text evidence="1">Belongs to the metallo-dependent hydrolases superfamily. DHOase family. Class II DHOase subfamily.</text>
</comment>
<accession>Q83RT8</accession>
<accession>Q7C230</accession>
<gene>
    <name evidence="1" type="primary">pyrC</name>
    <name type="ordered locus">SF1068</name>
    <name type="ordered locus">S1146</name>
</gene>
<reference key="1">
    <citation type="journal article" date="2002" name="Nucleic Acids Res.">
        <title>Genome sequence of Shigella flexneri 2a: insights into pathogenicity through comparison with genomes of Escherichia coli K12 and O157.</title>
        <authorList>
            <person name="Jin Q."/>
            <person name="Yuan Z."/>
            <person name="Xu J."/>
            <person name="Wang Y."/>
            <person name="Shen Y."/>
            <person name="Lu W."/>
            <person name="Wang J."/>
            <person name="Liu H."/>
            <person name="Yang J."/>
            <person name="Yang F."/>
            <person name="Zhang X."/>
            <person name="Zhang J."/>
            <person name="Yang G."/>
            <person name="Wu H."/>
            <person name="Qu D."/>
            <person name="Dong J."/>
            <person name="Sun L."/>
            <person name="Xue Y."/>
            <person name="Zhao A."/>
            <person name="Gao Y."/>
            <person name="Zhu J."/>
            <person name="Kan B."/>
            <person name="Ding K."/>
            <person name="Chen S."/>
            <person name="Cheng H."/>
            <person name="Yao Z."/>
            <person name="He B."/>
            <person name="Chen R."/>
            <person name="Ma D."/>
            <person name="Qiang B."/>
            <person name="Wen Y."/>
            <person name="Hou Y."/>
            <person name="Yu J."/>
        </authorList>
    </citation>
    <scope>NUCLEOTIDE SEQUENCE [LARGE SCALE GENOMIC DNA]</scope>
    <source>
        <strain>301 / Serotype 2a</strain>
    </source>
</reference>
<reference key="2">
    <citation type="journal article" date="2003" name="Infect. Immun.">
        <title>Complete genome sequence and comparative genomics of Shigella flexneri serotype 2a strain 2457T.</title>
        <authorList>
            <person name="Wei J."/>
            <person name="Goldberg M.B."/>
            <person name="Burland V."/>
            <person name="Venkatesan M.M."/>
            <person name="Deng W."/>
            <person name="Fournier G."/>
            <person name="Mayhew G.F."/>
            <person name="Plunkett G. III"/>
            <person name="Rose D.J."/>
            <person name="Darling A."/>
            <person name="Mau B."/>
            <person name="Perna N.T."/>
            <person name="Payne S.M."/>
            <person name="Runyen-Janecky L.J."/>
            <person name="Zhou S."/>
            <person name="Schwartz D.C."/>
            <person name="Blattner F.R."/>
        </authorList>
    </citation>
    <scope>NUCLEOTIDE SEQUENCE [LARGE SCALE GENOMIC DNA]</scope>
    <source>
        <strain>ATCC 700930 / 2457T / Serotype 2a</strain>
    </source>
</reference>